<organism>
    <name type="scientific">Pyrococcus furiosus (strain ATCC 43587 / DSM 3638 / JCM 8422 / Vc1)</name>
    <dbReference type="NCBI Taxonomy" id="186497"/>
    <lineage>
        <taxon>Archaea</taxon>
        <taxon>Methanobacteriati</taxon>
        <taxon>Methanobacteriota</taxon>
        <taxon>Thermococci</taxon>
        <taxon>Thermococcales</taxon>
        <taxon>Thermococcaceae</taxon>
        <taxon>Pyrococcus</taxon>
    </lineage>
</organism>
<dbReference type="EMBL" id="AE009950">
    <property type="protein sequence ID" value="AAL80374.1"/>
    <property type="status" value="ALT_INIT"/>
    <property type="molecule type" value="Genomic_DNA"/>
</dbReference>
<dbReference type="RefSeq" id="WP_014835095.1">
    <property type="nucleotide sequence ID" value="NZ_CP023154.1"/>
</dbReference>
<dbReference type="SMR" id="Q8U445"/>
<dbReference type="STRING" id="186497.PF0250"/>
<dbReference type="PaxDb" id="186497-PF0250"/>
<dbReference type="KEGG" id="pfu:PF0250"/>
<dbReference type="PATRIC" id="fig|186497.12.peg.261"/>
<dbReference type="eggNOG" id="arCOG01580">
    <property type="taxonomic scope" value="Archaea"/>
</dbReference>
<dbReference type="HOGENOM" id="CLU_091233_5_4_2"/>
<dbReference type="OrthoDB" id="6762at2157"/>
<dbReference type="PhylomeDB" id="Q8U445"/>
<dbReference type="Proteomes" id="UP000001013">
    <property type="component" value="Chromosome"/>
</dbReference>
<dbReference type="GO" id="GO:0005829">
    <property type="term" value="C:cytosol"/>
    <property type="evidence" value="ECO:0007669"/>
    <property type="project" value="TreeGrafter"/>
</dbReference>
<dbReference type="GO" id="GO:0043565">
    <property type="term" value="F:sequence-specific DNA binding"/>
    <property type="evidence" value="ECO:0007669"/>
    <property type="project" value="InterPro"/>
</dbReference>
<dbReference type="GO" id="GO:0043200">
    <property type="term" value="P:response to amino acid"/>
    <property type="evidence" value="ECO:0007669"/>
    <property type="project" value="TreeGrafter"/>
</dbReference>
<dbReference type="CDD" id="cd00090">
    <property type="entry name" value="HTH_ARSR"/>
    <property type="match status" value="1"/>
</dbReference>
<dbReference type="Gene3D" id="3.30.70.920">
    <property type="match status" value="1"/>
</dbReference>
<dbReference type="Gene3D" id="1.10.10.10">
    <property type="entry name" value="Winged helix-like DNA-binding domain superfamily/Winged helix DNA-binding domain"/>
    <property type="match status" value="1"/>
</dbReference>
<dbReference type="InterPro" id="IPR011991">
    <property type="entry name" value="ArsR-like_HTH"/>
</dbReference>
<dbReference type="InterPro" id="IPR000485">
    <property type="entry name" value="AsnC-type_HTH_dom"/>
</dbReference>
<dbReference type="InterPro" id="IPR011008">
    <property type="entry name" value="Dimeric_a/b-barrel"/>
</dbReference>
<dbReference type="InterPro" id="IPR019888">
    <property type="entry name" value="Tscrpt_reg_AsnC-like"/>
</dbReference>
<dbReference type="InterPro" id="IPR019887">
    <property type="entry name" value="Tscrpt_reg_AsnC/Lrp_C"/>
</dbReference>
<dbReference type="InterPro" id="IPR036388">
    <property type="entry name" value="WH-like_DNA-bd_sf"/>
</dbReference>
<dbReference type="InterPro" id="IPR036390">
    <property type="entry name" value="WH_DNA-bd_sf"/>
</dbReference>
<dbReference type="PANTHER" id="PTHR30154">
    <property type="entry name" value="LEUCINE-RESPONSIVE REGULATORY PROTEIN"/>
    <property type="match status" value="1"/>
</dbReference>
<dbReference type="PANTHER" id="PTHR30154:SF34">
    <property type="entry name" value="TRANSCRIPTIONAL REGULATOR AZLB"/>
    <property type="match status" value="1"/>
</dbReference>
<dbReference type="Pfam" id="PF01037">
    <property type="entry name" value="AsnC_trans_reg"/>
    <property type="match status" value="1"/>
</dbReference>
<dbReference type="Pfam" id="PF13412">
    <property type="entry name" value="HTH_24"/>
    <property type="match status" value="1"/>
</dbReference>
<dbReference type="PRINTS" id="PR00033">
    <property type="entry name" value="HTHASNC"/>
</dbReference>
<dbReference type="SMART" id="SM00344">
    <property type="entry name" value="HTH_ASNC"/>
    <property type="match status" value="1"/>
</dbReference>
<dbReference type="SUPFAM" id="SSF54909">
    <property type="entry name" value="Dimeric alpha+beta barrel"/>
    <property type="match status" value="1"/>
</dbReference>
<dbReference type="SUPFAM" id="SSF46785">
    <property type="entry name" value="Winged helix' DNA-binding domain"/>
    <property type="match status" value="1"/>
</dbReference>
<dbReference type="PROSITE" id="PS50956">
    <property type="entry name" value="HTH_ASNC_2"/>
    <property type="match status" value="1"/>
</dbReference>
<evidence type="ECO:0000255" key="1">
    <source>
        <dbReference type="PROSITE-ProRule" id="PRU00319"/>
    </source>
</evidence>
<evidence type="ECO:0000305" key="2"/>
<name>REG9_PYRFU</name>
<feature type="chain" id="PRO_0000111777" description="Uncharacterized HTH-type transcriptional regulator PF0250">
    <location>
        <begin position="1"/>
        <end position="150"/>
    </location>
</feature>
<feature type="domain" description="HTH asnC-type" evidence="1">
    <location>
        <begin position="5"/>
        <end position="66"/>
    </location>
</feature>
<feature type="DNA-binding region" description="H-T-H motif" evidence="1">
    <location>
        <begin position="24"/>
        <end position="43"/>
    </location>
</feature>
<reference key="1">
    <citation type="journal article" date="1999" name="Genetics">
        <title>Divergence of the hyperthermophilic archaea Pyrococcus furiosus and P. horikoshii inferred from complete genomic sequences.</title>
        <authorList>
            <person name="Maeder D.L."/>
            <person name="Weiss R.B."/>
            <person name="Dunn D.M."/>
            <person name="Cherry J.L."/>
            <person name="Gonzalez J.M."/>
            <person name="DiRuggiero J."/>
            <person name="Robb F.T."/>
        </authorList>
    </citation>
    <scope>NUCLEOTIDE SEQUENCE [LARGE SCALE GENOMIC DNA]</scope>
    <source>
        <strain>ATCC 43587 / DSM 3638 / JCM 8422 / Vc1</strain>
    </source>
</reference>
<comment type="sequence caution" evidence="2">
    <conflict type="erroneous initiation">
        <sequence resource="EMBL-CDS" id="AAL80374"/>
    </conflict>
</comment>
<accession>Q8U445</accession>
<gene>
    <name type="ordered locus">PF0250</name>
</gene>
<sequence length="150" mass="16986">MAELLDRTDKMLLEELKKNARENIAALSKKLGIPRTTVHYRIKRLLEEGIIEKFTIKPNYKKLNLGTTAFVLIRYDPDSGLTQKEVAEQIAKIPGVYEVHIVAGEWDILLKVRAANAEEVGKIVIEKLREIKGVGQTVTMVSFVTIKEEI</sequence>
<protein>
    <recommendedName>
        <fullName>Uncharacterized HTH-type transcriptional regulator PF0250</fullName>
    </recommendedName>
</protein>
<proteinExistence type="predicted"/>
<keyword id="KW-0238">DNA-binding</keyword>
<keyword id="KW-1185">Reference proteome</keyword>
<keyword id="KW-0804">Transcription</keyword>
<keyword id="KW-0805">Transcription regulation</keyword>